<accession>B7N061</accession>
<gene>
    <name evidence="1" type="primary">uppP</name>
    <name type="ordered locus">ECED1_3726</name>
</gene>
<organism>
    <name type="scientific">Escherichia coli O81 (strain ED1a)</name>
    <dbReference type="NCBI Taxonomy" id="585397"/>
    <lineage>
        <taxon>Bacteria</taxon>
        <taxon>Pseudomonadati</taxon>
        <taxon>Pseudomonadota</taxon>
        <taxon>Gammaproteobacteria</taxon>
        <taxon>Enterobacterales</taxon>
        <taxon>Enterobacteriaceae</taxon>
        <taxon>Escherichia</taxon>
    </lineage>
</organism>
<protein>
    <recommendedName>
        <fullName evidence="1">Undecaprenyl-diphosphatase</fullName>
        <ecNumber evidence="1">3.6.1.27</ecNumber>
    </recommendedName>
    <alternativeName>
        <fullName evidence="1">Bacitracin resistance protein</fullName>
    </alternativeName>
    <alternativeName>
        <fullName evidence="1">Undecaprenyl pyrophosphate phosphatase</fullName>
    </alternativeName>
</protein>
<feature type="chain" id="PRO_1000148814" description="Undecaprenyl-diphosphatase">
    <location>
        <begin position="1"/>
        <end position="273"/>
    </location>
</feature>
<feature type="transmembrane region" description="Helical" evidence="1">
    <location>
        <begin position="6"/>
        <end position="26"/>
    </location>
</feature>
<feature type="transmembrane region" description="Helical" evidence="1">
    <location>
        <begin position="45"/>
        <end position="65"/>
    </location>
</feature>
<feature type="transmembrane region" description="Helical" evidence="1">
    <location>
        <begin position="90"/>
        <end position="110"/>
    </location>
</feature>
<feature type="transmembrane region" description="Helical" evidence="1">
    <location>
        <begin position="116"/>
        <end position="136"/>
    </location>
</feature>
<feature type="transmembrane region" description="Helical" evidence="1">
    <location>
        <begin position="190"/>
        <end position="210"/>
    </location>
</feature>
<feature type="transmembrane region" description="Helical" evidence="1">
    <location>
        <begin position="222"/>
        <end position="242"/>
    </location>
</feature>
<feature type="transmembrane region" description="Helical" evidence="1">
    <location>
        <begin position="252"/>
        <end position="272"/>
    </location>
</feature>
<evidence type="ECO:0000255" key="1">
    <source>
        <dbReference type="HAMAP-Rule" id="MF_01006"/>
    </source>
</evidence>
<sequence length="273" mass="29773">MSDMHSLLIAAILGVVEGLTEFLPVSSTGHMIIVGHLLGFEGDTAKTFEVVIQLGSILAVVVMFWRRLFGLIGIHFGRPLQHEGESKGRLTLIHILLGMIPAVVLGLLFHDTIKSLFNPINVMYALVVGGLLLIAAECLKPKEPRAPGLDDMTYRQAFMIGCFQCLALWPGFSRSGATISGGMLMGVSRYAASEFSFLLAVPMMMGATALDLYKSWGFLTTGDIPMFAVGFITAFVVALIAIKTFLQLIKRISFIPFAIYRFIVAAAVYVVFF</sequence>
<dbReference type="EC" id="3.6.1.27" evidence="1"/>
<dbReference type="EMBL" id="CU928162">
    <property type="protein sequence ID" value="CAR09729.1"/>
    <property type="molecule type" value="Genomic_DNA"/>
</dbReference>
<dbReference type="SMR" id="B7N061"/>
<dbReference type="KEGG" id="ecq:ECED1_3726"/>
<dbReference type="HOGENOM" id="CLU_060296_2_0_6"/>
<dbReference type="Proteomes" id="UP000000748">
    <property type="component" value="Chromosome"/>
</dbReference>
<dbReference type="GO" id="GO:0005886">
    <property type="term" value="C:plasma membrane"/>
    <property type="evidence" value="ECO:0007669"/>
    <property type="project" value="UniProtKB-SubCell"/>
</dbReference>
<dbReference type="GO" id="GO:0050380">
    <property type="term" value="F:undecaprenyl-diphosphatase activity"/>
    <property type="evidence" value="ECO:0007669"/>
    <property type="project" value="UniProtKB-UniRule"/>
</dbReference>
<dbReference type="GO" id="GO:0071555">
    <property type="term" value="P:cell wall organization"/>
    <property type="evidence" value="ECO:0007669"/>
    <property type="project" value="UniProtKB-KW"/>
</dbReference>
<dbReference type="GO" id="GO:0009252">
    <property type="term" value="P:peptidoglycan biosynthetic process"/>
    <property type="evidence" value="ECO:0007669"/>
    <property type="project" value="UniProtKB-KW"/>
</dbReference>
<dbReference type="GO" id="GO:0008360">
    <property type="term" value="P:regulation of cell shape"/>
    <property type="evidence" value="ECO:0007669"/>
    <property type="project" value="UniProtKB-KW"/>
</dbReference>
<dbReference type="GO" id="GO:0046677">
    <property type="term" value="P:response to antibiotic"/>
    <property type="evidence" value="ECO:0007669"/>
    <property type="project" value="UniProtKB-UniRule"/>
</dbReference>
<dbReference type="HAMAP" id="MF_01006">
    <property type="entry name" value="Undec_diphosphatase"/>
    <property type="match status" value="1"/>
</dbReference>
<dbReference type="InterPro" id="IPR003824">
    <property type="entry name" value="UppP"/>
</dbReference>
<dbReference type="NCBIfam" id="NF001388">
    <property type="entry name" value="PRK00281.1-1"/>
    <property type="match status" value="1"/>
</dbReference>
<dbReference type="NCBIfam" id="NF001389">
    <property type="entry name" value="PRK00281.1-2"/>
    <property type="match status" value="1"/>
</dbReference>
<dbReference type="NCBIfam" id="NF001390">
    <property type="entry name" value="PRK00281.1-4"/>
    <property type="match status" value="1"/>
</dbReference>
<dbReference type="NCBIfam" id="TIGR00753">
    <property type="entry name" value="undec_PP_bacA"/>
    <property type="match status" value="1"/>
</dbReference>
<dbReference type="PANTHER" id="PTHR30622">
    <property type="entry name" value="UNDECAPRENYL-DIPHOSPHATASE"/>
    <property type="match status" value="1"/>
</dbReference>
<dbReference type="PANTHER" id="PTHR30622:SF3">
    <property type="entry name" value="UNDECAPRENYL-DIPHOSPHATASE"/>
    <property type="match status" value="1"/>
</dbReference>
<dbReference type="Pfam" id="PF02673">
    <property type="entry name" value="BacA"/>
    <property type="match status" value="1"/>
</dbReference>
<comment type="function">
    <text evidence="1">Catalyzes the dephosphorylation of undecaprenyl diphosphate (UPP). Confers resistance to bacitracin.</text>
</comment>
<comment type="catalytic activity">
    <reaction evidence="1">
        <text>di-trans,octa-cis-undecaprenyl diphosphate + H2O = di-trans,octa-cis-undecaprenyl phosphate + phosphate + H(+)</text>
        <dbReference type="Rhea" id="RHEA:28094"/>
        <dbReference type="ChEBI" id="CHEBI:15377"/>
        <dbReference type="ChEBI" id="CHEBI:15378"/>
        <dbReference type="ChEBI" id="CHEBI:43474"/>
        <dbReference type="ChEBI" id="CHEBI:58405"/>
        <dbReference type="ChEBI" id="CHEBI:60392"/>
        <dbReference type="EC" id="3.6.1.27"/>
    </reaction>
</comment>
<comment type="subcellular location">
    <subcellularLocation>
        <location evidence="1">Cell inner membrane</location>
        <topology evidence="1">Multi-pass membrane protein</topology>
    </subcellularLocation>
</comment>
<comment type="miscellaneous">
    <text>Bacitracin is thought to be involved in the inhibition of peptidoglycan synthesis by sequestering undecaprenyl diphosphate, thereby reducing the pool of lipid carrier available.</text>
</comment>
<comment type="similarity">
    <text evidence="1">Belongs to the UppP family.</text>
</comment>
<reference key="1">
    <citation type="journal article" date="2009" name="PLoS Genet.">
        <title>Organised genome dynamics in the Escherichia coli species results in highly diverse adaptive paths.</title>
        <authorList>
            <person name="Touchon M."/>
            <person name="Hoede C."/>
            <person name="Tenaillon O."/>
            <person name="Barbe V."/>
            <person name="Baeriswyl S."/>
            <person name="Bidet P."/>
            <person name="Bingen E."/>
            <person name="Bonacorsi S."/>
            <person name="Bouchier C."/>
            <person name="Bouvet O."/>
            <person name="Calteau A."/>
            <person name="Chiapello H."/>
            <person name="Clermont O."/>
            <person name="Cruveiller S."/>
            <person name="Danchin A."/>
            <person name="Diard M."/>
            <person name="Dossat C."/>
            <person name="Karoui M.E."/>
            <person name="Frapy E."/>
            <person name="Garry L."/>
            <person name="Ghigo J.M."/>
            <person name="Gilles A.M."/>
            <person name="Johnson J."/>
            <person name="Le Bouguenec C."/>
            <person name="Lescat M."/>
            <person name="Mangenot S."/>
            <person name="Martinez-Jehanne V."/>
            <person name="Matic I."/>
            <person name="Nassif X."/>
            <person name="Oztas S."/>
            <person name="Petit M.A."/>
            <person name="Pichon C."/>
            <person name="Rouy Z."/>
            <person name="Ruf C.S."/>
            <person name="Schneider D."/>
            <person name="Tourret J."/>
            <person name="Vacherie B."/>
            <person name="Vallenet D."/>
            <person name="Medigue C."/>
            <person name="Rocha E.P.C."/>
            <person name="Denamur E."/>
        </authorList>
    </citation>
    <scope>NUCLEOTIDE SEQUENCE [LARGE SCALE GENOMIC DNA]</scope>
    <source>
        <strain>ED1a</strain>
    </source>
</reference>
<name>UPPP_ECO81</name>
<keyword id="KW-0046">Antibiotic resistance</keyword>
<keyword id="KW-0997">Cell inner membrane</keyword>
<keyword id="KW-1003">Cell membrane</keyword>
<keyword id="KW-0133">Cell shape</keyword>
<keyword id="KW-0961">Cell wall biogenesis/degradation</keyword>
<keyword id="KW-0378">Hydrolase</keyword>
<keyword id="KW-0472">Membrane</keyword>
<keyword id="KW-0573">Peptidoglycan synthesis</keyword>
<keyword id="KW-0812">Transmembrane</keyword>
<keyword id="KW-1133">Transmembrane helix</keyword>
<proteinExistence type="inferred from homology"/>